<comment type="function">
    <text evidence="2">Catalyzes the three-step monooxygenation required for the demethylation of 4,4-dimethyl and 4alpha-methylsterols, which can be subsequently metabolized to cholesterol.</text>
</comment>
<comment type="catalytic activity">
    <reaction evidence="1">
        <text>4,4-dimethyl-5alpha-cholest-7-en-3beta-ol + 6 Fe(II)-[cytochrome b5] + 3 O2 + 5 H(+) = 4alpha-carboxy-4beta-methyl-5alpha-cholest-7-ene-3beta-ol + 6 Fe(III)-[cytochrome b5] + 4 H2O</text>
        <dbReference type="Rhea" id="RHEA:55220"/>
        <dbReference type="Rhea" id="RHEA-COMP:10438"/>
        <dbReference type="Rhea" id="RHEA-COMP:10439"/>
        <dbReference type="ChEBI" id="CHEBI:15377"/>
        <dbReference type="ChEBI" id="CHEBI:15378"/>
        <dbReference type="ChEBI" id="CHEBI:15379"/>
        <dbReference type="ChEBI" id="CHEBI:16455"/>
        <dbReference type="ChEBI" id="CHEBI:29033"/>
        <dbReference type="ChEBI" id="CHEBI:29034"/>
        <dbReference type="ChEBI" id="CHEBI:58387"/>
        <dbReference type="EC" id="1.14.18.9"/>
    </reaction>
    <physiologicalReaction direction="left-to-right" evidence="1">
        <dbReference type="Rhea" id="RHEA:55221"/>
    </physiologicalReaction>
</comment>
<comment type="catalytic activity">
    <reaction evidence="2">
        <text>4,4-dimethyl-5alpha-cholesta-8,24-dien-3beta-ol + 6 Fe(II)-[cytochrome b5] + 3 O2 + 5 H(+) = 4beta-methylzymosterol-4alpha-carboxylate + 6 Fe(III)-[cytochrome b5] + 4 H2O</text>
        <dbReference type="Rhea" id="RHEA:55244"/>
        <dbReference type="Rhea" id="RHEA-COMP:10438"/>
        <dbReference type="Rhea" id="RHEA-COMP:10439"/>
        <dbReference type="ChEBI" id="CHEBI:15377"/>
        <dbReference type="ChEBI" id="CHEBI:15378"/>
        <dbReference type="ChEBI" id="CHEBI:15379"/>
        <dbReference type="ChEBI" id="CHEBI:18364"/>
        <dbReference type="ChEBI" id="CHEBI:29033"/>
        <dbReference type="ChEBI" id="CHEBI:29034"/>
        <dbReference type="ChEBI" id="CHEBI:64925"/>
    </reaction>
    <physiologicalReaction direction="left-to-right" evidence="2">
        <dbReference type="Rhea" id="RHEA:55245"/>
    </physiologicalReaction>
</comment>
<comment type="catalytic activity">
    <reaction evidence="2">
        <text>4alpha-methylzymosterol + 6 Fe(II)-[cytochrome b5] + 3 O2 + 5 H(+) = 4alpha-carboxyzymosterol + 6 Fe(III)-[cytochrome b5] + 4 H2O</text>
        <dbReference type="Rhea" id="RHEA:47056"/>
        <dbReference type="Rhea" id="RHEA-COMP:10438"/>
        <dbReference type="Rhea" id="RHEA-COMP:10439"/>
        <dbReference type="ChEBI" id="CHEBI:1949"/>
        <dbReference type="ChEBI" id="CHEBI:15377"/>
        <dbReference type="ChEBI" id="CHEBI:15378"/>
        <dbReference type="ChEBI" id="CHEBI:15379"/>
        <dbReference type="ChEBI" id="CHEBI:29033"/>
        <dbReference type="ChEBI" id="CHEBI:29034"/>
        <dbReference type="ChEBI" id="CHEBI:143575"/>
    </reaction>
    <physiologicalReaction direction="left-to-right" evidence="2">
        <dbReference type="Rhea" id="RHEA:47057"/>
    </physiologicalReaction>
</comment>
<comment type="catalytic activity">
    <reaction evidence="2">
        <text>4alpha-methyl-5alpha-cholest-7-en-3beta-ol + 6 Fe(II)-[cytochrome b5] + 3 O2 + 5 H(+) = 4alpha-carboxy-5alpha-cholest-7-en-3beta-ol + 6 Fe(III)-[cytochrome b5] + 4 H2O</text>
        <dbReference type="Rhea" id="RHEA:62768"/>
        <dbReference type="Rhea" id="RHEA-COMP:10438"/>
        <dbReference type="Rhea" id="RHEA-COMP:10439"/>
        <dbReference type="ChEBI" id="CHEBI:15377"/>
        <dbReference type="ChEBI" id="CHEBI:15378"/>
        <dbReference type="ChEBI" id="CHEBI:15379"/>
        <dbReference type="ChEBI" id="CHEBI:18378"/>
        <dbReference type="ChEBI" id="CHEBI:29033"/>
        <dbReference type="ChEBI" id="CHEBI:29034"/>
        <dbReference type="ChEBI" id="CHEBI:145943"/>
    </reaction>
    <physiologicalReaction direction="left-to-right" evidence="2">
        <dbReference type="Rhea" id="RHEA:62769"/>
    </physiologicalReaction>
</comment>
<comment type="catalytic activity">
    <reaction evidence="2">
        <text>4,4-dimethyl-5alpha-cholest-8-en-3beta-ol + 6 Fe(II)-[cytochrome b5] + 3 O2 + 5 H(+) = 4alpha-carboxy-4beta-methyl-5alpha-cholest-8-en-3beta-ol + 6 Fe(III)-[cytochrome b5] + 4 H2O</text>
        <dbReference type="Rhea" id="RHEA:62776"/>
        <dbReference type="Rhea" id="RHEA-COMP:10438"/>
        <dbReference type="Rhea" id="RHEA-COMP:10439"/>
        <dbReference type="ChEBI" id="CHEBI:15377"/>
        <dbReference type="ChEBI" id="CHEBI:15378"/>
        <dbReference type="ChEBI" id="CHEBI:15379"/>
        <dbReference type="ChEBI" id="CHEBI:29033"/>
        <dbReference type="ChEBI" id="CHEBI:29034"/>
        <dbReference type="ChEBI" id="CHEBI:87044"/>
        <dbReference type="ChEBI" id="CHEBI:87047"/>
    </reaction>
    <physiologicalReaction direction="left-to-right" evidence="2">
        <dbReference type="Rhea" id="RHEA:62777"/>
    </physiologicalReaction>
</comment>
<comment type="catalytic activity">
    <reaction evidence="2">
        <text>4alpha-methyl-5alpha-cholest-8-en-3beta-ol + 6 Fe(II)-[cytochrome b5] + 3 O2 + 5 H(+) = 4alpha-carboxy-5alpha-cholest-8-ene-3beta-ol + 6 Fe(III)-[cytochrome b5] + 4 H2O</text>
        <dbReference type="Rhea" id="RHEA:62780"/>
        <dbReference type="Rhea" id="RHEA-COMP:10438"/>
        <dbReference type="Rhea" id="RHEA-COMP:10439"/>
        <dbReference type="ChEBI" id="CHEBI:15377"/>
        <dbReference type="ChEBI" id="CHEBI:15378"/>
        <dbReference type="ChEBI" id="CHEBI:15379"/>
        <dbReference type="ChEBI" id="CHEBI:29033"/>
        <dbReference type="ChEBI" id="CHEBI:29034"/>
        <dbReference type="ChEBI" id="CHEBI:87051"/>
        <dbReference type="ChEBI" id="CHEBI:87055"/>
    </reaction>
    <physiologicalReaction direction="left-to-right" evidence="2">
        <dbReference type="Rhea" id="RHEA:62781"/>
    </physiologicalReaction>
</comment>
<comment type="cofactor">
    <cofactor evidence="2">
        <name>Fe cation</name>
        <dbReference type="ChEBI" id="CHEBI:24875"/>
    </cofactor>
</comment>
<comment type="pathway">
    <text evidence="2">Steroid biosynthesis; zymosterol biosynthesis; zymosterol from lanosterol: step 3/6.</text>
</comment>
<comment type="pathway">
    <text evidence="2">Steroid biosynthesis; cholesterol biosynthesis.</text>
</comment>
<comment type="subcellular location">
    <subcellularLocation>
        <location evidence="2">Endoplasmic reticulum membrane</location>
        <topology evidence="2">Multi-pass membrane protein</topology>
    </subcellularLocation>
</comment>
<comment type="domain">
    <text evidence="2">The histidine box domains may contain the active site and/or be involved in metal ion binding.</text>
</comment>
<comment type="PTM">
    <text evidence="2">Ubiquitinated by MARCHF6, leading to proteasomal degradation.</text>
</comment>
<comment type="similarity">
    <text evidence="4">Belongs to the sterol desaturase family.</text>
</comment>
<evidence type="ECO:0000250" key="1">
    <source>
        <dbReference type="UniProtKB" id="O35532"/>
    </source>
</evidence>
<evidence type="ECO:0000250" key="2">
    <source>
        <dbReference type="UniProtKB" id="Q15800"/>
    </source>
</evidence>
<evidence type="ECO:0000255" key="3"/>
<evidence type="ECO:0000305" key="4"/>
<gene>
    <name type="primary">MSMO1</name>
    <name type="synonym">SC4MOL</name>
</gene>
<keyword id="KW-0152">Cholesterol biosynthesis</keyword>
<keyword id="KW-0153">Cholesterol metabolism</keyword>
<keyword id="KW-0256">Endoplasmic reticulum</keyword>
<keyword id="KW-0408">Iron</keyword>
<keyword id="KW-0444">Lipid biosynthesis</keyword>
<keyword id="KW-0443">Lipid metabolism</keyword>
<keyword id="KW-0472">Membrane</keyword>
<keyword id="KW-0520">NAD</keyword>
<keyword id="KW-0560">Oxidoreductase</keyword>
<keyword id="KW-1185">Reference proteome</keyword>
<keyword id="KW-0752">Steroid biosynthesis</keyword>
<keyword id="KW-0753">Steroid metabolism</keyword>
<keyword id="KW-0756">Sterol biosynthesis</keyword>
<keyword id="KW-1207">Sterol metabolism</keyword>
<keyword id="KW-0812">Transmembrane</keyword>
<keyword id="KW-1133">Transmembrane helix</keyword>
<keyword id="KW-0832">Ubl conjugation</keyword>
<proteinExistence type="evidence at transcript level"/>
<feature type="chain" id="PRO_0000249851" description="Methylsterol monooxygenase 1">
    <location>
        <begin position="1"/>
        <end position="293"/>
    </location>
</feature>
<feature type="transmembrane region" description="Helical" evidence="3">
    <location>
        <begin position="55"/>
        <end position="75"/>
    </location>
</feature>
<feature type="transmembrane region" description="Helical" evidence="3">
    <location>
        <begin position="100"/>
        <end position="120"/>
    </location>
</feature>
<feature type="transmembrane region" description="Helical" evidence="3">
    <location>
        <begin position="199"/>
        <end position="219"/>
    </location>
</feature>
<feature type="domain" description="Fatty acid hydroxylase" evidence="3">
    <location>
        <begin position="145"/>
        <end position="274"/>
    </location>
</feature>
<feature type="short sequence motif" description="Histidine box-1">
    <location>
        <begin position="157"/>
        <end position="161"/>
    </location>
</feature>
<feature type="short sequence motif" description="Histidine box-2">
    <location>
        <begin position="170"/>
        <end position="174"/>
    </location>
</feature>
<feature type="short sequence motif" description="Histidine box-3">
    <location>
        <begin position="249"/>
        <end position="255"/>
    </location>
</feature>
<dbReference type="EC" id="1.14.18.9" evidence="1"/>
<dbReference type="EMBL" id="AY370690">
    <property type="protein sequence ID" value="AAQ67416.1"/>
    <property type="molecule type" value="mRNA"/>
</dbReference>
<dbReference type="RefSeq" id="NP_998917.1">
    <property type="nucleotide sequence ID" value="NM_213752.1"/>
</dbReference>
<dbReference type="FunCoup" id="Q6UGB2">
    <property type="interactions" value="282"/>
</dbReference>
<dbReference type="STRING" id="9823.ENSSSCP00000036001"/>
<dbReference type="PaxDb" id="9823-ENSSSCP00000009448"/>
<dbReference type="PeptideAtlas" id="Q6UGB2"/>
<dbReference type="GeneID" id="396590"/>
<dbReference type="KEGG" id="ssc:396590"/>
<dbReference type="CTD" id="6307"/>
<dbReference type="eggNOG" id="KOG0873">
    <property type="taxonomic scope" value="Eukaryota"/>
</dbReference>
<dbReference type="InParanoid" id="Q6UGB2"/>
<dbReference type="OrthoDB" id="1658724at2759"/>
<dbReference type="UniPathway" id="UPA00063"/>
<dbReference type="UniPathway" id="UPA00770">
    <property type="reaction ID" value="UER00756"/>
</dbReference>
<dbReference type="Proteomes" id="UP000008227">
    <property type="component" value="Unplaced"/>
</dbReference>
<dbReference type="Proteomes" id="UP000314985">
    <property type="component" value="Unplaced"/>
</dbReference>
<dbReference type="Proteomes" id="UP000694570">
    <property type="component" value="Unplaced"/>
</dbReference>
<dbReference type="Proteomes" id="UP000694571">
    <property type="component" value="Unplaced"/>
</dbReference>
<dbReference type="Proteomes" id="UP000694720">
    <property type="component" value="Unplaced"/>
</dbReference>
<dbReference type="Proteomes" id="UP000694722">
    <property type="component" value="Unplaced"/>
</dbReference>
<dbReference type="Proteomes" id="UP000694723">
    <property type="component" value="Unplaced"/>
</dbReference>
<dbReference type="Proteomes" id="UP000694724">
    <property type="component" value="Unplaced"/>
</dbReference>
<dbReference type="Proteomes" id="UP000694725">
    <property type="component" value="Unplaced"/>
</dbReference>
<dbReference type="Proteomes" id="UP000694726">
    <property type="component" value="Unplaced"/>
</dbReference>
<dbReference type="Proteomes" id="UP000694727">
    <property type="component" value="Unplaced"/>
</dbReference>
<dbReference type="Proteomes" id="UP000694728">
    <property type="component" value="Unplaced"/>
</dbReference>
<dbReference type="GO" id="GO:0005789">
    <property type="term" value="C:endoplasmic reticulum membrane"/>
    <property type="evidence" value="ECO:0000318"/>
    <property type="project" value="GO_Central"/>
</dbReference>
<dbReference type="GO" id="GO:0000254">
    <property type="term" value="F:C-4 methylsterol oxidase activity"/>
    <property type="evidence" value="ECO:0000318"/>
    <property type="project" value="GO_Central"/>
</dbReference>
<dbReference type="GO" id="GO:0005506">
    <property type="term" value="F:iron ion binding"/>
    <property type="evidence" value="ECO:0007669"/>
    <property type="project" value="InterPro"/>
</dbReference>
<dbReference type="GO" id="GO:0006695">
    <property type="term" value="P:cholesterol biosynthetic process"/>
    <property type="evidence" value="ECO:0007669"/>
    <property type="project" value="UniProtKB-UniPathway"/>
</dbReference>
<dbReference type="GO" id="GO:0016126">
    <property type="term" value="P:sterol biosynthetic process"/>
    <property type="evidence" value="ECO:0000318"/>
    <property type="project" value="GO_Central"/>
</dbReference>
<dbReference type="InterPro" id="IPR006694">
    <property type="entry name" value="Fatty_acid_hydroxylase"/>
</dbReference>
<dbReference type="InterPro" id="IPR050307">
    <property type="entry name" value="Sterol_Desaturase_Related"/>
</dbReference>
<dbReference type="PANTHER" id="PTHR11863">
    <property type="entry name" value="STEROL DESATURASE"/>
    <property type="match status" value="1"/>
</dbReference>
<dbReference type="Pfam" id="PF04116">
    <property type="entry name" value="FA_hydroxylase"/>
    <property type="match status" value="1"/>
</dbReference>
<protein>
    <recommendedName>
        <fullName>Methylsterol monooxygenase 1</fullName>
        <ecNumber evidence="1">1.14.18.9</ecNumber>
    </recommendedName>
    <alternativeName>
        <fullName>C-4 methylsterol oxidase</fullName>
    </alternativeName>
    <alternativeName>
        <fullName>Sterol-C4-methyl oxidase</fullName>
    </alternativeName>
</protein>
<reference key="1">
    <citation type="submission" date="2003-08" db="EMBL/GenBank/DDBJ databases">
        <authorList>
            <person name="Hwang K.-C."/>
            <person name="Ok D.-W."/>
            <person name="Kwon D.-N."/>
            <person name="Choi Y.-J."/>
            <person name="Lee S.-Y."/>
            <person name="Kim J.-H."/>
        </authorList>
    </citation>
    <scope>NUCLEOTIDE SEQUENCE [MRNA]</scope>
    <source>
        <tissue>Testis</tissue>
    </source>
</reference>
<sequence length="293" mass="35102">MATNQSISIFSSASLAVEYVDSLLPENPLQEPFKNAWNYMLNNYTKFQIATWGSLIVHEALYFFFCLPGFLFQFIPYMKKYKIQKDKPETWENQWKCFKVLLFNHFCIQFPLICGTYYFTEYFSIPYDWETMPRWYIALARCFGCAVIEDTWHYFLHRLLHHKRIYKYIHKIHHEFQAPFGMEAEYAHPLETLILGTGFFIGIMLLCDHVILLWAWVTVRLIETIDVHSGYDIPLNPLHLIPFYAGSRHHDFHHMNFIGNYASTFTWWDRIFGTDAQYNAYNEKRKKAEKKTE</sequence>
<accession>Q6UGB2</accession>
<name>MSMO1_PIG</name>
<organism>
    <name type="scientific">Sus scrofa</name>
    <name type="common">Pig</name>
    <dbReference type="NCBI Taxonomy" id="9823"/>
    <lineage>
        <taxon>Eukaryota</taxon>
        <taxon>Metazoa</taxon>
        <taxon>Chordata</taxon>
        <taxon>Craniata</taxon>
        <taxon>Vertebrata</taxon>
        <taxon>Euteleostomi</taxon>
        <taxon>Mammalia</taxon>
        <taxon>Eutheria</taxon>
        <taxon>Laurasiatheria</taxon>
        <taxon>Artiodactyla</taxon>
        <taxon>Suina</taxon>
        <taxon>Suidae</taxon>
        <taxon>Sus</taxon>
    </lineage>
</organism>